<comment type="function">
    <text evidence="1">Catalyzes the cleavage of 5-oxoproline to form L-glutamate coupled to the hydrolysis of ATP to ADP and inorganic phosphate.</text>
</comment>
<comment type="catalytic activity">
    <reaction evidence="1">
        <text>5-oxo-L-proline + ATP + 2 H2O = L-glutamate + ADP + phosphate + H(+)</text>
        <dbReference type="Rhea" id="RHEA:10348"/>
        <dbReference type="ChEBI" id="CHEBI:15377"/>
        <dbReference type="ChEBI" id="CHEBI:15378"/>
        <dbReference type="ChEBI" id="CHEBI:29985"/>
        <dbReference type="ChEBI" id="CHEBI:30616"/>
        <dbReference type="ChEBI" id="CHEBI:43474"/>
        <dbReference type="ChEBI" id="CHEBI:58402"/>
        <dbReference type="ChEBI" id="CHEBI:456216"/>
        <dbReference type="EC" id="3.5.2.9"/>
    </reaction>
</comment>
<comment type="subunit">
    <text evidence="1">Forms a complex composed of PxpA, PxpB and PxpC.</text>
</comment>
<comment type="similarity">
    <text evidence="1">Belongs to the LamB/PxpA family.</text>
</comment>
<name>PXPA_RHOPA</name>
<organism>
    <name type="scientific">Rhodopseudomonas palustris (strain ATCC BAA-98 / CGA009)</name>
    <dbReference type="NCBI Taxonomy" id="258594"/>
    <lineage>
        <taxon>Bacteria</taxon>
        <taxon>Pseudomonadati</taxon>
        <taxon>Pseudomonadota</taxon>
        <taxon>Alphaproteobacteria</taxon>
        <taxon>Hyphomicrobiales</taxon>
        <taxon>Nitrobacteraceae</taxon>
        <taxon>Rhodopseudomonas</taxon>
    </lineage>
</organism>
<reference key="1">
    <citation type="journal article" date="2004" name="Nat. Biotechnol.">
        <title>Complete genome sequence of the metabolically versatile photosynthetic bacterium Rhodopseudomonas palustris.</title>
        <authorList>
            <person name="Larimer F.W."/>
            <person name="Chain P."/>
            <person name="Hauser L."/>
            <person name="Lamerdin J.E."/>
            <person name="Malfatti S."/>
            <person name="Do L."/>
            <person name="Land M.L."/>
            <person name="Pelletier D.A."/>
            <person name="Beatty J.T."/>
            <person name="Lang A.S."/>
            <person name="Tabita F.R."/>
            <person name="Gibson J.L."/>
            <person name="Hanson T.E."/>
            <person name="Bobst C."/>
            <person name="Torres y Torres J.L."/>
            <person name="Peres C."/>
            <person name="Harrison F.H."/>
            <person name="Gibson J."/>
            <person name="Harwood C.S."/>
        </authorList>
    </citation>
    <scope>NUCLEOTIDE SEQUENCE [LARGE SCALE GENOMIC DNA]</scope>
    <source>
        <strain>ATCC BAA-98 / CGA009</strain>
    </source>
</reference>
<gene>
    <name evidence="1" type="primary">pxpA</name>
    <name type="ordered locus">RPA2681</name>
</gene>
<evidence type="ECO:0000255" key="1">
    <source>
        <dbReference type="HAMAP-Rule" id="MF_00691"/>
    </source>
</evidence>
<sequence length="254" mass="26517">MKIDLNCDLGEGFGVWQMGDDAAMMQIATSVNIACGFHAGDPDIMHATVKLAKQNGVAIGAHPGFRDLHGFGRRPVPGITAAEIENLVAYQIGALQAVAALAGHKVTHVKAHGALSNVACEDDMTARAIASAIKAVDPSLVFVVLANSKLMLAGEAAGLPLAHEVFADRAYEDDGNLVSRKKPGAVLHDPNEIAERVLRMAQDGAVVSVTGKVIKMRTDTVCIHGDTKGAVEIARGVRRKLEASGITVAPFAGT</sequence>
<protein>
    <recommendedName>
        <fullName evidence="1">5-oxoprolinase subunit A</fullName>
        <shortName evidence="1">5-OPase subunit A</shortName>
        <ecNumber evidence="1">3.5.2.9</ecNumber>
    </recommendedName>
    <alternativeName>
        <fullName evidence="1">5-oxoprolinase (ATP-hydrolyzing) subunit A</fullName>
    </alternativeName>
</protein>
<feature type="chain" id="PRO_0000185036" description="5-oxoprolinase subunit A">
    <location>
        <begin position="1"/>
        <end position="254"/>
    </location>
</feature>
<accession>Q6N6D6</accession>
<proteinExistence type="inferred from homology"/>
<dbReference type="EC" id="3.5.2.9" evidence="1"/>
<dbReference type="EMBL" id="BX572601">
    <property type="protein sequence ID" value="CAE28122.1"/>
    <property type="molecule type" value="Genomic_DNA"/>
</dbReference>
<dbReference type="RefSeq" id="WP_011158231.1">
    <property type="nucleotide sequence ID" value="NZ_CP116810.1"/>
</dbReference>
<dbReference type="SMR" id="Q6N6D6"/>
<dbReference type="STRING" id="258594.RPA2681"/>
<dbReference type="GeneID" id="66893756"/>
<dbReference type="eggNOG" id="COG1540">
    <property type="taxonomic scope" value="Bacteria"/>
</dbReference>
<dbReference type="HOGENOM" id="CLU_069535_0_0_5"/>
<dbReference type="PhylomeDB" id="Q6N6D6"/>
<dbReference type="GO" id="GO:0017168">
    <property type="term" value="F:5-oxoprolinase (ATP-hydrolyzing) activity"/>
    <property type="evidence" value="ECO:0007669"/>
    <property type="project" value="UniProtKB-UniRule"/>
</dbReference>
<dbReference type="GO" id="GO:0005524">
    <property type="term" value="F:ATP binding"/>
    <property type="evidence" value="ECO:0007669"/>
    <property type="project" value="UniProtKB-UniRule"/>
</dbReference>
<dbReference type="GO" id="GO:0005975">
    <property type="term" value="P:carbohydrate metabolic process"/>
    <property type="evidence" value="ECO:0007669"/>
    <property type="project" value="InterPro"/>
</dbReference>
<dbReference type="CDD" id="cd10787">
    <property type="entry name" value="LamB_YcsF_like"/>
    <property type="match status" value="1"/>
</dbReference>
<dbReference type="Gene3D" id="3.20.20.370">
    <property type="entry name" value="Glycoside hydrolase/deacetylase"/>
    <property type="match status" value="1"/>
</dbReference>
<dbReference type="HAMAP" id="MF_00691">
    <property type="entry name" value="PxpA"/>
    <property type="match status" value="1"/>
</dbReference>
<dbReference type="InterPro" id="IPR011330">
    <property type="entry name" value="Glyco_hydro/deAcase_b/a-brl"/>
</dbReference>
<dbReference type="InterPro" id="IPR005501">
    <property type="entry name" value="LamB/YcsF/PxpA-like"/>
</dbReference>
<dbReference type="NCBIfam" id="NF003814">
    <property type="entry name" value="PRK05406.1-3"/>
    <property type="match status" value="1"/>
</dbReference>
<dbReference type="NCBIfam" id="NF003816">
    <property type="entry name" value="PRK05406.1-5"/>
    <property type="match status" value="1"/>
</dbReference>
<dbReference type="PANTHER" id="PTHR30292:SF0">
    <property type="entry name" value="5-OXOPROLINASE SUBUNIT A"/>
    <property type="match status" value="1"/>
</dbReference>
<dbReference type="PANTHER" id="PTHR30292">
    <property type="entry name" value="UNCHARACTERIZED PROTEIN YBGL-RELATED"/>
    <property type="match status" value="1"/>
</dbReference>
<dbReference type="Pfam" id="PF03746">
    <property type="entry name" value="LamB_YcsF"/>
    <property type="match status" value="1"/>
</dbReference>
<dbReference type="SUPFAM" id="SSF88713">
    <property type="entry name" value="Glycoside hydrolase/deacetylase"/>
    <property type="match status" value="1"/>
</dbReference>
<keyword id="KW-0067">ATP-binding</keyword>
<keyword id="KW-0378">Hydrolase</keyword>
<keyword id="KW-0547">Nucleotide-binding</keyword>